<reference key="1">
    <citation type="submission" date="2009-03" db="EMBL/GenBank/DDBJ databases">
        <title>Complete genome sequence of Edwardsiella ictaluri 93-146.</title>
        <authorList>
            <person name="Williams M.L."/>
            <person name="Gillaspy A.F."/>
            <person name="Dyer D.W."/>
            <person name="Thune R.L."/>
            <person name="Waldbieser G.C."/>
            <person name="Schuster S.C."/>
            <person name="Gipson J."/>
            <person name="Zaitshik J."/>
            <person name="Landry C."/>
            <person name="Lawrence M.L."/>
        </authorList>
    </citation>
    <scope>NUCLEOTIDE SEQUENCE [LARGE SCALE GENOMIC DNA]</scope>
    <source>
        <strain>93-146</strain>
    </source>
</reference>
<comment type="function">
    <text evidence="1">One of the early assembly proteins it binds 23S rRNA. One of the proteins that surrounds the polypeptide exit tunnel on the outside of the ribosome. Forms the main docking site for trigger factor binding to the ribosome.</text>
</comment>
<comment type="subunit">
    <text evidence="1">Part of the 50S ribosomal subunit. Contacts protein L29, and trigger factor when it is bound to the ribosome.</text>
</comment>
<comment type="similarity">
    <text evidence="1">Belongs to the universal ribosomal protein uL23 family.</text>
</comment>
<organism>
    <name type="scientific">Edwardsiella ictaluri (strain 93-146)</name>
    <dbReference type="NCBI Taxonomy" id="634503"/>
    <lineage>
        <taxon>Bacteria</taxon>
        <taxon>Pseudomonadati</taxon>
        <taxon>Pseudomonadota</taxon>
        <taxon>Gammaproteobacteria</taxon>
        <taxon>Enterobacterales</taxon>
        <taxon>Hafniaceae</taxon>
        <taxon>Edwardsiella</taxon>
    </lineage>
</organism>
<proteinExistence type="inferred from homology"/>
<protein>
    <recommendedName>
        <fullName evidence="1">Large ribosomal subunit protein uL23</fullName>
    </recommendedName>
    <alternativeName>
        <fullName evidence="2">50S ribosomal protein L23</fullName>
    </alternativeName>
</protein>
<sequence length="100" mass="11273">MIREERLLKVLRAPHVSEKASMAMEKNNTIVLKVATDATKAEIKAAVKKLFEVEVDTVRTLVVKGKVKRHGQRIGRRSDWKKAYVTLKEGQNLDFIGGAE</sequence>
<evidence type="ECO:0000255" key="1">
    <source>
        <dbReference type="HAMAP-Rule" id="MF_01369"/>
    </source>
</evidence>
<evidence type="ECO:0000305" key="2"/>
<accession>C5BGM3</accession>
<keyword id="KW-0687">Ribonucleoprotein</keyword>
<keyword id="KW-0689">Ribosomal protein</keyword>
<keyword id="KW-0694">RNA-binding</keyword>
<keyword id="KW-0699">rRNA-binding</keyword>
<name>RL23_EDWI9</name>
<dbReference type="EMBL" id="CP001600">
    <property type="protein sequence ID" value="ACR70720.1"/>
    <property type="molecule type" value="Genomic_DNA"/>
</dbReference>
<dbReference type="RefSeq" id="WP_005290397.1">
    <property type="nucleotide sequence ID" value="NZ_CP169062.1"/>
</dbReference>
<dbReference type="SMR" id="C5BGM3"/>
<dbReference type="STRING" id="67780.B6E78_09560"/>
<dbReference type="GeneID" id="93122115"/>
<dbReference type="KEGG" id="eic:NT01EI_3592"/>
<dbReference type="HOGENOM" id="CLU_037562_3_1_6"/>
<dbReference type="OrthoDB" id="9793353at2"/>
<dbReference type="Proteomes" id="UP000001485">
    <property type="component" value="Chromosome"/>
</dbReference>
<dbReference type="GO" id="GO:1990904">
    <property type="term" value="C:ribonucleoprotein complex"/>
    <property type="evidence" value="ECO:0007669"/>
    <property type="project" value="UniProtKB-KW"/>
</dbReference>
<dbReference type="GO" id="GO:0005840">
    <property type="term" value="C:ribosome"/>
    <property type="evidence" value="ECO:0007669"/>
    <property type="project" value="UniProtKB-KW"/>
</dbReference>
<dbReference type="GO" id="GO:0019843">
    <property type="term" value="F:rRNA binding"/>
    <property type="evidence" value="ECO:0007669"/>
    <property type="project" value="UniProtKB-UniRule"/>
</dbReference>
<dbReference type="GO" id="GO:0003735">
    <property type="term" value="F:structural constituent of ribosome"/>
    <property type="evidence" value="ECO:0007669"/>
    <property type="project" value="InterPro"/>
</dbReference>
<dbReference type="GO" id="GO:0006412">
    <property type="term" value="P:translation"/>
    <property type="evidence" value="ECO:0007669"/>
    <property type="project" value="UniProtKB-UniRule"/>
</dbReference>
<dbReference type="FunFam" id="3.30.70.330:FF:000001">
    <property type="entry name" value="50S ribosomal protein L23"/>
    <property type="match status" value="1"/>
</dbReference>
<dbReference type="Gene3D" id="3.30.70.330">
    <property type="match status" value="1"/>
</dbReference>
<dbReference type="HAMAP" id="MF_01369_B">
    <property type="entry name" value="Ribosomal_uL23_B"/>
    <property type="match status" value="1"/>
</dbReference>
<dbReference type="InterPro" id="IPR012677">
    <property type="entry name" value="Nucleotide-bd_a/b_plait_sf"/>
</dbReference>
<dbReference type="InterPro" id="IPR013025">
    <property type="entry name" value="Ribosomal_uL23-like"/>
</dbReference>
<dbReference type="InterPro" id="IPR012678">
    <property type="entry name" value="Ribosomal_uL23/eL15/eS24_sf"/>
</dbReference>
<dbReference type="InterPro" id="IPR001014">
    <property type="entry name" value="Ribosomal_uL23_CS"/>
</dbReference>
<dbReference type="NCBIfam" id="NF004358">
    <property type="entry name" value="PRK05738.1-1"/>
    <property type="match status" value="1"/>
</dbReference>
<dbReference type="NCBIfam" id="NF004359">
    <property type="entry name" value="PRK05738.1-3"/>
    <property type="match status" value="1"/>
</dbReference>
<dbReference type="NCBIfam" id="NF004363">
    <property type="entry name" value="PRK05738.2-4"/>
    <property type="match status" value="1"/>
</dbReference>
<dbReference type="NCBIfam" id="NF004366">
    <property type="entry name" value="PRK05738.3-2"/>
    <property type="match status" value="1"/>
</dbReference>
<dbReference type="PANTHER" id="PTHR11620">
    <property type="entry name" value="60S RIBOSOMAL PROTEIN L23A"/>
    <property type="match status" value="1"/>
</dbReference>
<dbReference type="Pfam" id="PF00276">
    <property type="entry name" value="Ribosomal_L23"/>
    <property type="match status" value="1"/>
</dbReference>
<dbReference type="SUPFAM" id="SSF54189">
    <property type="entry name" value="Ribosomal proteins S24e, L23 and L15e"/>
    <property type="match status" value="1"/>
</dbReference>
<dbReference type="PROSITE" id="PS00050">
    <property type="entry name" value="RIBOSOMAL_L23"/>
    <property type="match status" value="1"/>
</dbReference>
<gene>
    <name evidence="1" type="primary">rplW</name>
    <name type="ordered locus">NT01EI_3592</name>
</gene>
<feature type="chain" id="PRO_1000215032" description="Large ribosomal subunit protein uL23">
    <location>
        <begin position="1"/>
        <end position="100"/>
    </location>
</feature>